<dbReference type="EC" id="2.4.1.182" evidence="1"/>
<dbReference type="EMBL" id="CR378672">
    <property type="protein sequence ID" value="CAG21289.1"/>
    <property type="molecule type" value="Genomic_DNA"/>
</dbReference>
<dbReference type="RefSeq" id="WP_011219556.1">
    <property type="nucleotide sequence ID" value="NC_006370.1"/>
</dbReference>
<dbReference type="SMR" id="Q6LN37"/>
<dbReference type="STRING" id="298386.PBPRA2955"/>
<dbReference type="CAZy" id="GT19">
    <property type="family name" value="Glycosyltransferase Family 19"/>
</dbReference>
<dbReference type="KEGG" id="ppr:PBPRA2955"/>
<dbReference type="eggNOG" id="COG0763">
    <property type="taxonomic scope" value="Bacteria"/>
</dbReference>
<dbReference type="HOGENOM" id="CLU_036577_3_0_6"/>
<dbReference type="UniPathway" id="UPA00973"/>
<dbReference type="Proteomes" id="UP000000593">
    <property type="component" value="Chromosome 1"/>
</dbReference>
<dbReference type="GO" id="GO:0016020">
    <property type="term" value="C:membrane"/>
    <property type="evidence" value="ECO:0007669"/>
    <property type="project" value="GOC"/>
</dbReference>
<dbReference type="GO" id="GO:0008915">
    <property type="term" value="F:lipid-A-disaccharide synthase activity"/>
    <property type="evidence" value="ECO:0007669"/>
    <property type="project" value="UniProtKB-UniRule"/>
</dbReference>
<dbReference type="GO" id="GO:0005543">
    <property type="term" value="F:phospholipid binding"/>
    <property type="evidence" value="ECO:0007669"/>
    <property type="project" value="TreeGrafter"/>
</dbReference>
<dbReference type="GO" id="GO:0009245">
    <property type="term" value="P:lipid A biosynthetic process"/>
    <property type="evidence" value="ECO:0007669"/>
    <property type="project" value="UniProtKB-UniRule"/>
</dbReference>
<dbReference type="CDD" id="cd01635">
    <property type="entry name" value="Glycosyltransferase_GTB-type"/>
    <property type="match status" value="1"/>
</dbReference>
<dbReference type="HAMAP" id="MF_00392">
    <property type="entry name" value="LpxB"/>
    <property type="match status" value="1"/>
</dbReference>
<dbReference type="InterPro" id="IPR003835">
    <property type="entry name" value="Glyco_trans_19"/>
</dbReference>
<dbReference type="NCBIfam" id="TIGR00215">
    <property type="entry name" value="lpxB"/>
    <property type="match status" value="1"/>
</dbReference>
<dbReference type="PANTHER" id="PTHR30372">
    <property type="entry name" value="LIPID-A-DISACCHARIDE SYNTHASE"/>
    <property type="match status" value="1"/>
</dbReference>
<dbReference type="PANTHER" id="PTHR30372:SF4">
    <property type="entry name" value="LIPID-A-DISACCHARIDE SYNTHASE, MITOCHONDRIAL-RELATED"/>
    <property type="match status" value="1"/>
</dbReference>
<dbReference type="Pfam" id="PF02684">
    <property type="entry name" value="LpxB"/>
    <property type="match status" value="1"/>
</dbReference>
<dbReference type="SUPFAM" id="SSF53756">
    <property type="entry name" value="UDP-Glycosyltransferase/glycogen phosphorylase"/>
    <property type="match status" value="1"/>
</dbReference>
<evidence type="ECO:0000255" key="1">
    <source>
        <dbReference type="HAMAP-Rule" id="MF_00392"/>
    </source>
</evidence>
<comment type="function">
    <text evidence="1">Condensation of UDP-2,3-diacylglucosamine and 2,3-diacylglucosamine-1-phosphate to form lipid A disaccharide, a precursor of lipid A, a phosphorylated glycolipid that anchors the lipopolysaccharide to the outer membrane of the cell.</text>
</comment>
<comment type="catalytic activity">
    <reaction evidence="1">
        <text>a lipid X + a UDP-2-N,3-O-bis[(3R)-3-hydroxyacyl]-alpha-D-glucosamine = a lipid A disaccharide + UDP + H(+)</text>
        <dbReference type="Rhea" id="RHEA:67828"/>
        <dbReference type="ChEBI" id="CHEBI:15378"/>
        <dbReference type="ChEBI" id="CHEBI:58223"/>
        <dbReference type="ChEBI" id="CHEBI:137748"/>
        <dbReference type="ChEBI" id="CHEBI:176338"/>
        <dbReference type="ChEBI" id="CHEBI:176343"/>
        <dbReference type="EC" id="2.4.1.182"/>
    </reaction>
</comment>
<comment type="pathway">
    <text evidence="1">Bacterial outer membrane biogenesis; LPS lipid A biosynthesis.</text>
</comment>
<comment type="similarity">
    <text evidence="1">Belongs to the LpxB family.</text>
</comment>
<proteinExistence type="inferred from homology"/>
<accession>Q6LN37</accession>
<protein>
    <recommendedName>
        <fullName evidence="1">Lipid-A-disaccharide synthase</fullName>
        <ecNumber evidence="1">2.4.1.182</ecNumber>
    </recommendedName>
</protein>
<keyword id="KW-0328">Glycosyltransferase</keyword>
<keyword id="KW-0441">Lipid A biosynthesis</keyword>
<keyword id="KW-0444">Lipid biosynthesis</keyword>
<keyword id="KW-0443">Lipid metabolism</keyword>
<keyword id="KW-1185">Reference proteome</keyword>
<keyword id="KW-0808">Transferase</keyword>
<sequence>MTKPLRIGIVAGEISGDILGAGFIRAIKAQYPDAEFVGVAGPRMEAEGCKALFDMEELAVMGIVEVLGRLPRLLKVKAELVKYFTENPPDVFVGIDAPDFNLRLELDLKQHGIKTVHYVSPSVWAWRQKRIFKIEAATNLVLAFLPFEKAFYDKFNVPCEFVGHTMADAIPLETDKAAAQALLNLDGSKRWLAVLPGSRGSEMGMLAAPFIETCKLLKQKHPDLGFVVALVNEKRREQFQLAWQETAPELDFVLVNDTARNVMIASDAVLLASGTVALECMLVGRPMVVGYKVKPLTAWIIRRLVKTKYVSLANILADKPLVTELLQEDCVPEKLSAEVDRILSSDNTELLSEFSIMHQSIKCDADNRAAHAVLSLINKV</sequence>
<reference key="1">
    <citation type="journal article" date="2005" name="Science">
        <title>Life at depth: Photobacterium profundum genome sequence and expression analysis.</title>
        <authorList>
            <person name="Vezzi A."/>
            <person name="Campanaro S."/>
            <person name="D'Angelo M."/>
            <person name="Simonato F."/>
            <person name="Vitulo N."/>
            <person name="Lauro F.M."/>
            <person name="Cestaro A."/>
            <person name="Malacrida G."/>
            <person name="Simionati B."/>
            <person name="Cannata N."/>
            <person name="Romualdi C."/>
            <person name="Bartlett D.H."/>
            <person name="Valle G."/>
        </authorList>
    </citation>
    <scope>NUCLEOTIDE SEQUENCE [LARGE SCALE GENOMIC DNA]</scope>
    <source>
        <strain>ATCC BAA-1253 / SS9</strain>
    </source>
</reference>
<feature type="chain" id="PRO_0000255205" description="Lipid-A-disaccharide synthase">
    <location>
        <begin position="1"/>
        <end position="380"/>
    </location>
</feature>
<gene>
    <name evidence="1" type="primary">lpxB</name>
    <name type="ordered locus">PBPRA2955</name>
</gene>
<organism>
    <name type="scientific">Photobacterium profundum (strain SS9)</name>
    <dbReference type="NCBI Taxonomy" id="298386"/>
    <lineage>
        <taxon>Bacteria</taxon>
        <taxon>Pseudomonadati</taxon>
        <taxon>Pseudomonadota</taxon>
        <taxon>Gammaproteobacteria</taxon>
        <taxon>Vibrionales</taxon>
        <taxon>Vibrionaceae</taxon>
        <taxon>Photobacterium</taxon>
    </lineage>
</organism>
<name>LPXB_PHOPR</name>